<comment type="function">
    <text evidence="2">Could be involved in fluoroquinolones efflux.</text>
</comment>
<comment type="subcellular location">
    <subcellularLocation>
        <location evidence="3">Cell membrane</location>
        <topology evidence="3">Multi-pass membrane protein</topology>
    </subcellularLocation>
</comment>
<comment type="similarity">
    <text evidence="3">Belongs to the major facilitator superfamily.</text>
</comment>
<keyword id="KW-0046">Antibiotic resistance</keyword>
<keyword id="KW-1003">Cell membrane</keyword>
<keyword id="KW-0472">Membrane</keyword>
<keyword id="KW-1185">Reference proteome</keyword>
<keyword id="KW-0812">Transmembrane</keyword>
<keyword id="KW-1133">Transmembrane helix</keyword>
<keyword id="KW-0813">Transport</keyword>
<accession>P9WJX3</accession>
<accession>L0TA74</accession>
<accession>O06151</accession>
<accession>Q7D886</accession>
<evidence type="ECO:0000255" key="1"/>
<evidence type="ECO:0000269" key="2">
    <source>
    </source>
</evidence>
<evidence type="ECO:0000305" key="3"/>
<protein>
    <recommendedName>
        <fullName>Probable multidrug-efflux transporter Rv1634</fullName>
    </recommendedName>
</protein>
<dbReference type="EMBL" id="AL123456">
    <property type="protein sequence ID" value="CCP44398.1"/>
    <property type="molecule type" value="Genomic_DNA"/>
</dbReference>
<dbReference type="PIR" id="H70559">
    <property type="entry name" value="H70559"/>
</dbReference>
<dbReference type="RefSeq" id="NP_216150.1">
    <property type="nucleotide sequence ID" value="NC_000962.3"/>
</dbReference>
<dbReference type="RefSeq" id="WP_003898954.1">
    <property type="nucleotide sequence ID" value="NZ_NVQJ01000016.1"/>
</dbReference>
<dbReference type="SMR" id="P9WJX3"/>
<dbReference type="STRING" id="83332.Rv1634"/>
<dbReference type="PaxDb" id="83332-Rv1634"/>
<dbReference type="DNASU" id="885115"/>
<dbReference type="GeneID" id="885115"/>
<dbReference type="KEGG" id="mtu:Rv1634"/>
<dbReference type="KEGG" id="mtv:RVBD_1634"/>
<dbReference type="TubercuList" id="Rv1634"/>
<dbReference type="eggNOG" id="COG2814">
    <property type="taxonomic scope" value="Bacteria"/>
</dbReference>
<dbReference type="InParanoid" id="P9WJX3"/>
<dbReference type="OrthoDB" id="3503984at2"/>
<dbReference type="Proteomes" id="UP000001584">
    <property type="component" value="Chromosome"/>
</dbReference>
<dbReference type="GO" id="GO:0005886">
    <property type="term" value="C:plasma membrane"/>
    <property type="evidence" value="ECO:0000318"/>
    <property type="project" value="GO_Central"/>
</dbReference>
<dbReference type="GO" id="GO:0015562">
    <property type="term" value="F:efflux transmembrane transporter activity"/>
    <property type="evidence" value="ECO:0000315"/>
    <property type="project" value="MTBBASE"/>
</dbReference>
<dbReference type="GO" id="GO:0022857">
    <property type="term" value="F:transmembrane transporter activity"/>
    <property type="evidence" value="ECO:0000318"/>
    <property type="project" value="GO_Central"/>
</dbReference>
<dbReference type="GO" id="GO:0046677">
    <property type="term" value="P:response to antibiotic"/>
    <property type="evidence" value="ECO:0007669"/>
    <property type="project" value="UniProtKB-KW"/>
</dbReference>
<dbReference type="GO" id="GO:0055085">
    <property type="term" value="P:transmembrane transport"/>
    <property type="evidence" value="ECO:0000318"/>
    <property type="project" value="GO_Central"/>
</dbReference>
<dbReference type="GO" id="GO:1990961">
    <property type="term" value="P:xenobiotic detoxification by transmembrane export across the plasma membrane"/>
    <property type="evidence" value="ECO:0000315"/>
    <property type="project" value="MTBBASE"/>
</dbReference>
<dbReference type="FunFam" id="1.20.1250.20:FF:000887">
    <property type="entry name" value="Probable multidrug-efflux transporter MT1670"/>
    <property type="match status" value="1"/>
</dbReference>
<dbReference type="Gene3D" id="1.20.1250.20">
    <property type="entry name" value="MFS general substrate transporter like domains"/>
    <property type="match status" value="2"/>
</dbReference>
<dbReference type="InterPro" id="IPR011701">
    <property type="entry name" value="MFS"/>
</dbReference>
<dbReference type="InterPro" id="IPR020846">
    <property type="entry name" value="MFS_dom"/>
</dbReference>
<dbReference type="InterPro" id="IPR036259">
    <property type="entry name" value="MFS_trans_sf"/>
</dbReference>
<dbReference type="PANTHER" id="PTHR23501">
    <property type="entry name" value="MAJOR FACILITATOR SUPERFAMILY"/>
    <property type="match status" value="1"/>
</dbReference>
<dbReference type="PANTHER" id="PTHR23501:SF154">
    <property type="entry name" value="MULTIDRUG-EFFLUX TRANSPORTER RV1634-RELATED"/>
    <property type="match status" value="1"/>
</dbReference>
<dbReference type="Pfam" id="PF07690">
    <property type="entry name" value="MFS_1"/>
    <property type="match status" value="1"/>
</dbReference>
<dbReference type="SUPFAM" id="SSF103473">
    <property type="entry name" value="MFS general substrate transporter"/>
    <property type="match status" value="1"/>
</dbReference>
<dbReference type="PROSITE" id="PS50850">
    <property type="entry name" value="MFS"/>
    <property type="match status" value="1"/>
</dbReference>
<sequence length="471" mass="47713">MTETASETGSWRELLSRYLGTSIVLAGGVALYATNEFLTISLLPSTIADIGGSRLYAWVTTLYLVGSVVAATTVNTMLLRVGARSSYLMGLAVFGLASLVCAAAPSMQILVAGRTLQGIAGGLLAGLGYALINSTLPKSLWTRGSALVSAMWGVATLIGPATGGLFAQLGLWRWAFGVMTLLTALMAMLVPVALGAGGVGPGGETPVGSTHKVPVWSLLLMGAAALAISVAALPNYLVQTAGLLAAAALLVAVFVVVDWRIHAAVLPPSVFGSGPLKWIYLTMSVQMIAAMVDTYVPLFGQRLGHLTPVAAGFLGAALAVGWTVGEVASASLNSARVIGHVVAAAPLVMASGLALGAVTQRADAPVGIIALWALALLIIGTGIGIAWPHLTVRAMDSVADPAESSAAAAAINVVQLISGAFGAGLAGVVVNTAKGGEVAAARGLYMAFTVLAAAGVIASYQATHRDRRLPR</sequence>
<name>Y1634_MYCTU</name>
<organism>
    <name type="scientific">Mycobacterium tuberculosis (strain ATCC 25618 / H37Rv)</name>
    <dbReference type="NCBI Taxonomy" id="83332"/>
    <lineage>
        <taxon>Bacteria</taxon>
        <taxon>Bacillati</taxon>
        <taxon>Actinomycetota</taxon>
        <taxon>Actinomycetes</taxon>
        <taxon>Mycobacteriales</taxon>
        <taxon>Mycobacteriaceae</taxon>
        <taxon>Mycobacterium</taxon>
        <taxon>Mycobacterium tuberculosis complex</taxon>
    </lineage>
</organism>
<gene>
    <name type="ordered locus">Rv1634</name>
</gene>
<feature type="chain" id="PRO_0000390683" description="Probable multidrug-efflux transporter Rv1634">
    <location>
        <begin position="1"/>
        <end position="471"/>
    </location>
</feature>
<feature type="transmembrane region" description="Helical" evidence="1">
    <location>
        <begin position="23"/>
        <end position="43"/>
    </location>
</feature>
<feature type="transmembrane region" description="Helical" evidence="1">
    <location>
        <begin position="55"/>
        <end position="75"/>
    </location>
</feature>
<feature type="transmembrane region" description="Helical" evidence="1">
    <location>
        <begin position="91"/>
        <end position="111"/>
    </location>
</feature>
<feature type="transmembrane region" description="Helical" evidence="1">
    <location>
        <begin position="116"/>
        <end position="136"/>
    </location>
</feature>
<feature type="transmembrane region" description="Helical" evidence="1">
    <location>
        <begin position="146"/>
        <end position="166"/>
    </location>
</feature>
<feature type="transmembrane region" description="Helical" evidence="1">
    <location>
        <begin position="174"/>
        <end position="194"/>
    </location>
</feature>
<feature type="transmembrane region" description="Helical" evidence="1">
    <location>
        <begin position="213"/>
        <end position="233"/>
    </location>
</feature>
<feature type="transmembrane region" description="Helical" evidence="1">
    <location>
        <begin position="237"/>
        <end position="257"/>
    </location>
</feature>
<feature type="transmembrane region" description="Helical" evidence="1">
    <location>
        <begin position="279"/>
        <end position="299"/>
    </location>
</feature>
<feature type="transmembrane region" description="Helical" evidence="1">
    <location>
        <begin position="308"/>
        <end position="328"/>
    </location>
</feature>
<feature type="transmembrane region" description="Helical" evidence="1">
    <location>
        <begin position="337"/>
        <end position="357"/>
    </location>
</feature>
<feature type="transmembrane region" description="Helical" evidence="1">
    <location>
        <begin position="366"/>
        <end position="386"/>
    </location>
</feature>
<feature type="transmembrane region" description="Helical" evidence="1">
    <location>
        <begin position="410"/>
        <end position="430"/>
    </location>
</feature>
<feature type="transmembrane region" description="Helical" evidence="1">
    <location>
        <begin position="438"/>
        <end position="458"/>
    </location>
</feature>
<proteinExistence type="evidence at protein level"/>
<reference key="1">
    <citation type="journal article" date="1998" name="Nature">
        <title>Deciphering the biology of Mycobacterium tuberculosis from the complete genome sequence.</title>
        <authorList>
            <person name="Cole S.T."/>
            <person name="Brosch R."/>
            <person name="Parkhill J."/>
            <person name="Garnier T."/>
            <person name="Churcher C.M."/>
            <person name="Harris D.E."/>
            <person name="Gordon S.V."/>
            <person name="Eiglmeier K."/>
            <person name="Gas S."/>
            <person name="Barry C.E. III"/>
            <person name="Tekaia F."/>
            <person name="Badcock K."/>
            <person name="Basham D."/>
            <person name="Brown D."/>
            <person name="Chillingworth T."/>
            <person name="Connor R."/>
            <person name="Davies R.M."/>
            <person name="Devlin K."/>
            <person name="Feltwell T."/>
            <person name="Gentles S."/>
            <person name="Hamlin N."/>
            <person name="Holroyd S."/>
            <person name="Hornsby T."/>
            <person name="Jagels K."/>
            <person name="Krogh A."/>
            <person name="McLean J."/>
            <person name="Moule S."/>
            <person name="Murphy L.D."/>
            <person name="Oliver S."/>
            <person name="Osborne J."/>
            <person name="Quail M.A."/>
            <person name="Rajandream M.A."/>
            <person name="Rogers J."/>
            <person name="Rutter S."/>
            <person name="Seeger K."/>
            <person name="Skelton S."/>
            <person name="Squares S."/>
            <person name="Squares R."/>
            <person name="Sulston J.E."/>
            <person name="Taylor K."/>
            <person name="Whitehead S."/>
            <person name="Barrell B.G."/>
        </authorList>
    </citation>
    <scope>NUCLEOTIDE SEQUENCE [LARGE SCALE GENOMIC DNA]</scope>
    <source>
        <strain>ATCC 25618 / H37Rv</strain>
    </source>
</reference>
<reference key="2">
    <citation type="journal article" date="2002" name="Mol. Med.">
        <title>The multidrug transporters belonging to major facilitator superfamily in Mycobacterium tuberculosis.</title>
        <authorList>
            <person name="De Rossi E."/>
            <person name="Arrigo P."/>
            <person name="Bellinzoni M."/>
            <person name="Silva P.A."/>
            <person name="Martin C."/>
            <person name="Ainsa J.A."/>
            <person name="Guglierame P."/>
            <person name="Riccardi G."/>
        </authorList>
    </citation>
    <scope>FUNCTION IN FLUOROQUINOLONES EFFLUX</scope>
    <source>
        <strain>ATCC 25618 / H37Rv</strain>
    </source>
</reference>
<reference key="3">
    <citation type="journal article" date="2011" name="Mol. Cell. Proteomics">
        <title>Proteogenomic analysis of Mycobacterium tuberculosis by high resolution mass spectrometry.</title>
        <authorList>
            <person name="Kelkar D.S."/>
            <person name="Kumar D."/>
            <person name="Kumar P."/>
            <person name="Balakrishnan L."/>
            <person name="Muthusamy B."/>
            <person name="Yadav A.K."/>
            <person name="Shrivastava P."/>
            <person name="Marimuthu A."/>
            <person name="Anand S."/>
            <person name="Sundaram H."/>
            <person name="Kingsbury R."/>
            <person name="Harsha H.C."/>
            <person name="Nair B."/>
            <person name="Prasad T.S."/>
            <person name="Chauhan D.S."/>
            <person name="Katoch K."/>
            <person name="Katoch V.M."/>
            <person name="Kumar P."/>
            <person name="Chaerkady R."/>
            <person name="Ramachandran S."/>
            <person name="Dash D."/>
            <person name="Pandey A."/>
        </authorList>
    </citation>
    <scope>IDENTIFICATION BY MASS SPECTROMETRY [LARGE SCALE ANALYSIS]</scope>
    <source>
        <strain>ATCC 25618 / H37Rv</strain>
    </source>
</reference>